<reference key="1">
    <citation type="journal article" date="2010" name="J. Bacteriol.">
        <title>Genome sequence of the dioxin-mineralizing bacterium Sphingomonas wittichii RW1.</title>
        <authorList>
            <person name="Miller T.R."/>
            <person name="Delcher A.L."/>
            <person name="Salzberg S.L."/>
            <person name="Saunders E."/>
            <person name="Detter J.C."/>
            <person name="Halden R.U."/>
        </authorList>
    </citation>
    <scope>NUCLEOTIDE SEQUENCE [LARGE SCALE GENOMIC DNA]</scope>
    <source>
        <strain>DSM 6014 / CCUG 31198 / JCM 15750 / NBRC 105917 / EY 4224 / RW1</strain>
    </source>
</reference>
<dbReference type="EC" id="1.4.99.-" evidence="1"/>
<dbReference type="EMBL" id="CP000699">
    <property type="protein sequence ID" value="ABQ67175.1"/>
    <property type="molecule type" value="Genomic_DNA"/>
</dbReference>
<dbReference type="SMR" id="A5V4F9"/>
<dbReference type="STRING" id="392499.Swit_0808"/>
<dbReference type="PaxDb" id="392499-Swit_0808"/>
<dbReference type="KEGG" id="swi:Swit_0808"/>
<dbReference type="eggNOG" id="COG0665">
    <property type="taxonomic scope" value="Bacteria"/>
</dbReference>
<dbReference type="HOGENOM" id="CLU_007884_9_2_5"/>
<dbReference type="OrthoDB" id="9805337at2"/>
<dbReference type="UniPathway" id="UPA00043">
    <property type="reaction ID" value="UER00498"/>
</dbReference>
<dbReference type="Proteomes" id="UP000001989">
    <property type="component" value="Chromosome"/>
</dbReference>
<dbReference type="GO" id="GO:0005737">
    <property type="term" value="C:cytoplasm"/>
    <property type="evidence" value="ECO:0007669"/>
    <property type="project" value="TreeGrafter"/>
</dbReference>
<dbReference type="GO" id="GO:0005886">
    <property type="term" value="C:plasma membrane"/>
    <property type="evidence" value="ECO:0007669"/>
    <property type="project" value="TreeGrafter"/>
</dbReference>
<dbReference type="GO" id="GO:0008718">
    <property type="term" value="F:D-amino-acid dehydrogenase activity"/>
    <property type="evidence" value="ECO:0007669"/>
    <property type="project" value="UniProtKB-UniRule"/>
</dbReference>
<dbReference type="GO" id="GO:0055130">
    <property type="term" value="P:D-alanine catabolic process"/>
    <property type="evidence" value="ECO:0007669"/>
    <property type="project" value="UniProtKB-UniPathway"/>
</dbReference>
<dbReference type="FunFam" id="3.50.50.60:FF:000020">
    <property type="entry name" value="D-amino acid dehydrogenase"/>
    <property type="match status" value="1"/>
</dbReference>
<dbReference type="Gene3D" id="3.30.9.10">
    <property type="entry name" value="D-Amino Acid Oxidase, subunit A, domain 2"/>
    <property type="match status" value="1"/>
</dbReference>
<dbReference type="Gene3D" id="3.50.50.60">
    <property type="entry name" value="FAD/NAD(P)-binding domain"/>
    <property type="match status" value="2"/>
</dbReference>
<dbReference type="HAMAP" id="MF_01202">
    <property type="entry name" value="DadA"/>
    <property type="match status" value="1"/>
</dbReference>
<dbReference type="InterPro" id="IPR023080">
    <property type="entry name" value="DadA"/>
</dbReference>
<dbReference type="InterPro" id="IPR006076">
    <property type="entry name" value="FAD-dep_OxRdtase"/>
</dbReference>
<dbReference type="InterPro" id="IPR036188">
    <property type="entry name" value="FAD/NAD-bd_sf"/>
</dbReference>
<dbReference type="NCBIfam" id="NF001933">
    <property type="entry name" value="PRK00711.1"/>
    <property type="match status" value="1"/>
</dbReference>
<dbReference type="PANTHER" id="PTHR13847:SF280">
    <property type="entry name" value="D-AMINO ACID DEHYDROGENASE"/>
    <property type="match status" value="1"/>
</dbReference>
<dbReference type="PANTHER" id="PTHR13847">
    <property type="entry name" value="SARCOSINE DEHYDROGENASE-RELATED"/>
    <property type="match status" value="1"/>
</dbReference>
<dbReference type="Pfam" id="PF01266">
    <property type="entry name" value="DAO"/>
    <property type="match status" value="1"/>
</dbReference>
<dbReference type="SUPFAM" id="SSF54373">
    <property type="entry name" value="FAD-linked reductases, C-terminal domain"/>
    <property type="match status" value="1"/>
</dbReference>
<dbReference type="SUPFAM" id="SSF51905">
    <property type="entry name" value="FAD/NAD(P)-binding domain"/>
    <property type="match status" value="1"/>
</dbReference>
<evidence type="ECO:0000255" key="1">
    <source>
        <dbReference type="HAMAP-Rule" id="MF_01202"/>
    </source>
</evidence>
<gene>
    <name evidence="1" type="primary">dadA</name>
    <name type="ordered locus">Swit_0808</name>
</gene>
<comment type="function">
    <text evidence="1">Oxidative deamination of D-amino acids.</text>
</comment>
<comment type="catalytic activity">
    <reaction evidence="1">
        <text>a D-alpha-amino acid + A + H2O = a 2-oxocarboxylate + AH2 + NH4(+)</text>
        <dbReference type="Rhea" id="RHEA:18125"/>
        <dbReference type="ChEBI" id="CHEBI:13193"/>
        <dbReference type="ChEBI" id="CHEBI:15377"/>
        <dbReference type="ChEBI" id="CHEBI:17499"/>
        <dbReference type="ChEBI" id="CHEBI:28938"/>
        <dbReference type="ChEBI" id="CHEBI:35179"/>
        <dbReference type="ChEBI" id="CHEBI:59871"/>
    </reaction>
</comment>
<comment type="cofactor">
    <cofactor evidence="1">
        <name>FAD</name>
        <dbReference type="ChEBI" id="CHEBI:57692"/>
    </cofactor>
</comment>
<comment type="pathway">
    <text>Amino-acid degradation; D-alanine degradation; NH(3) and pyruvate from D-alanine: step 1/1.</text>
</comment>
<comment type="similarity">
    <text evidence="1">Belongs to the DadA oxidoreductase family.</text>
</comment>
<feature type="chain" id="PRO_1000066121" description="D-amino acid dehydrogenase">
    <location>
        <begin position="1"/>
        <end position="416"/>
    </location>
</feature>
<feature type="binding site" evidence="1">
    <location>
        <begin position="3"/>
        <end position="17"/>
    </location>
    <ligand>
        <name>FAD</name>
        <dbReference type="ChEBI" id="CHEBI:57692"/>
    </ligand>
</feature>
<proteinExistence type="inferred from homology"/>
<accession>A5V4F9</accession>
<name>DADA_RHIWR</name>
<organism>
    <name type="scientific">Rhizorhabdus wittichii (strain DSM 6014 / CCUG 31198 / JCM 15750 / NBRC 105917 / EY 4224 / RW1)</name>
    <name type="common">Sphingomonas wittichii</name>
    <dbReference type="NCBI Taxonomy" id="392499"/>
    <lineage>
        <taxon>Bacteria</taxon>
        <taxon>Pseudomonadati</taxon>
        <taxon>Pseudomonadota</taxon>
        <taxon>Alphaproteobacteria</taxon>
        <taxon>Sphingomonadales</taxon>
        <taxon>Sphingomonadaceae</taxon>
        <taxon>Rhizorhabdus</taxon>
    </lineage>
</organism>
<keyword id="KW-0274">FAD</keyword>
<keyword id="KW-0285">Flavoprotein</keyword>
<keyword id="KW-0560">Oxidoreductase</keyword>
<keyword id="KW-1185">Reference proteome</keyword>
<sequence>MKVVILGAGVIGVTSAWYLARAGHEVVVVDRQDGPALETSFANAGEISPGYASPWAAPGIPAKALRWLFMRHAPLIVRPGFDPAMVRWLVAMLGNCTARAYRVNKGRMVRLAEFSRDRLIELRQETGIRYDERSQGTLQLFRREKDLAGVAKDIEVLKADGVPFELLDAAGCIAAEPGLANSASPIAGGLRLPNDETGDCFKFTNALAELAKAEGVRFVLGRRIDAIVASGNRIAHVRTDRGDISGDAYLVALGSHSPLLLSPLGIRLPVYPVKGYSITVPIVDPARAPVSTLLDESFKVAITRLGDRIRVGGMAEISGYSNDLPPARRATLDHCVGSLFPDAGDLSQASFWTGLRPMTPDGTPVIGATGYRNLFLNTGHGTLGWTMACGSGHVIADIIGGKRPAIETGDLAIDRY</sequence>
<protein>
    <recommendedName>
        <fullName evidence="1">D-amino acid dehydrogenase</fullName>
        <ecNumber evidence="1">1.4.99.-</ecNumber>
    </recommendedName>
</protein>